<comment type="function">
    <text evidence="1">An anti-sigma factor for extracytoplasmic function (ECF) sigma factor SigM. ECF sigma factors are held in an inactive form by an anti-sigma factor until released by regulated intramembrane proteolysis (RIP). RIP occurs when an extracytoplasmic signal triggers a concerted proteolytic cascade to transmit information and elicit cellular responses. The membrane-spanning regulatory substrate protein is first cut extracytoplasmically (site-1 protease, S1P), then within the membrane itself (site-2 protease, S2P, Rip1), while cytoplasmic proteases finish degrading the regulatory protein, liberating the sigma factor (By similarity).</text>
</comment>
<comment type="subunit">
    <text evidence="1">Interacts with ECF RNA polymerase sigma factor SigM; this should inhibit the interaction of SigM with the RNA polymerase catalytic core.</text>
</comment>
<comment type="subcellular location">
    <subcellularLocation>
        <location evidence="3">Cell membrane</location>
        <topology evidence="3">Single-pass membrane protein</topology>
    </subcellularLocation>
</comment>
<comment type="domain">
    <text evidence="1">The cytosolic domain interacts with sigma factor SigM.</text>
</comment>
<comment type="PTM">
    <text>Probably cleaved within the membrane by Rip1 near the cytoplasmic membrane interface.</text>
</comment>
<keyword id="KW-1003">Cell membrane</keyword>
<keyword id="KW-0472">Membrane</keyword>
<keyword id="KW-0804">Transcription</keyword>
<keyword id="KW-0805">Transcription regulation</keyword>
<keyword id="KW-0812">Transmembrane</keyword>
<keyword id="KW-1133">Transmembrane helix</keyword>
<proteinExistence type="evidence at protein level"/>
<accession>H8F2P5</accession>
<dbReference type="EMBL" id="AP012340">
    <property type="protein sequence ID" value="BAL68056.1"/>
    <property type="molecule type" value="Genomic_DNA"/>
</dbReference>
<dbReference type="RefSeq" id="WP_003400148.1">
    <property type="nucleotide sequence ID" value="NZ_KK339488.1"/>
</dbReference>
<dbReference type="KEGG" id="mtn:ERDMAN_4292"/>
<dbReference type="PATRIC" id="fig|652616.3.peg.4374"/>
<dbReference type="HOGENOM" id="CLU_080969_0_0_11"/>
<dbReference type="GO" id="GO:0005886">
    <property type="term" value="C:plasma membrane"/>
    <property type="evidence" value="ECO:0007669"/>
    <property type="project" value="UniProtKB-SubCell"/>
</dbReference>
<organism>
    <name type="scientific">Mycobacterium tuberculosis (strain ATCC 35801 / TMC 107 / Erdman)</name>
    <dbReference type="NCBI Taxonomy" id="652616"/>
    <lineage>
        <taxon>Bacteria</taxon>
        <taxon>Bacillati</taxon>
        <taxon>Actinomycetota</taxon>
        <taxon>Actinomycetes</taxon>
        <taxon>Mycobacteriales</taxon>
        <taxon>Mycobacteriaceae</taxon>
        <taxon>Mycobacterium</taxon>
        <taxon>Mycobacterium tuberculosis complex</taxon>
    </lineage>
</organism>
<name>RSMAF_MYCTE</name>
<sequence length="254" mass="25769">MSAADKDPDKHSADADPPLTVELLADLQAGLLDDATAARIRSRVRSDPQAQQILRALNRVRRDVAAMGADPAWGPAARPAVVDSISAALRSARPNSSPGAAHAARPHVHPVRMIAGAAGLCAVATAIGVGAVVDAPPPAPSAPTTAQHITVSKPAPVIPLSRPQVLDLLHHTPDYGPPGGPLGDPSRRTSCLSGLGYPASTPVLGAQPIDIDARPAVLLVIPADTPDKLAVFAVAPHCSAADTGLLASTVVPRA</sequence>
<reference key="1">
    <citation type="journal article" date="2012" name="J. Bacteriol.">
        <title>Complete annotated genome sequence of Mycobacterium tuberculosis Erdman.</title>
        <authorList>
            <person name="Miyoshi-Akiyama T."/>
            <person name="Matsumura K."/>
            <person name="Iwai H."/>
            <person name="Funatogawa K."/>
            <person name="Kirikae T."/>
        </authorList>
    </citation>
    <scope>NUCLEOTIDE SEQUENCE [LARGE SCALE GENOMIC DNA]</scope>
    <source>
        <strain>ATCC 35801 / TMC 107 / Erdman</strain>
    </source>
</reference>
<reference key="2">
    <citation type="journal article" date="2010" name="Mol. Microbiol.">
        <title>M. tuberculosis intramembrane protease Rip1 controls transcription through three anti-sigma factor substrates.</title>
        <authorList>
            <person name="Sklar J.G."/>
            <person name="Makinoshima H."/>
            <person name="Schneider J.S."/>
            <person name="Glickman M.S."/>
        </authorList>
    </citation>
    <scope>PROBABLE CLEAVAGE BY RIP1</scope>
    <source>
        <strain>ATCC 35801 / TMC 107 / Erdman</strain>
    </source>
</reference>
<evidence type="ECO:0000250" key="1"/>
<evidence type="ECO:0000255" key="2"/>
<evidence type="ECO:0000305" key="3"/>
<feature type="chain" id="PRO_0000422685" description="Anti-sigma-M factor RsmA">
    <location>
        <begin position="1"/>
        <end position="254"/>
    </location>
</feature>
<feature type="topological domain" description="Cytoplasmic" evidence="2">
    <location>
        <begin position="1"/>
        <end position="112"/>
    </location>
</feature>
<feature type="transmembrane region" description="Helical" evidence="2">
    <location>
        <begin position="113"/>
        <end position="133"/>
    </location>
</feature>
<feature type="topological domain" description="Extracellular" evidence="2">
    <location>
        <begin position="134"/>
        <end position="254"/>
    </location>
</feature>
<protein>
    <recommendedName>
        <fullName>Anti-sigma-M factor RsmA</fullName>
    </recommendedName>
    <alternativeName>
        <fullName>Regulator of SigM</fullName>
    </alternativeName>
    <alternativeName>
        <fullName>Sigma-M anti-sigma factor RsmA</fullName>
    </alternativeName>
</protein>
<gene>
    <name type="primary">rsmA</name>
    <name type="ordered locus">ERDMAN_4292</name>
</gene>